<reference key="1">
    <citation type="journal article" date="1991" name="Mol. Microbiol.">
        <title>L-pilin variants of Neisseria gonorrhoeae MS11.</title>
        <authorList>
            <person name="Manning P.A."/>
            <person name="Kaufmann A."/>
            <person name="Roll U."/>
            <person name="Pohlner J."/>
            <person name="Meyer T.F."/>
            <person name="Haas R."/>
        </authorList>
    </citation>
    <scope>NUCLEOTIDE SEQUENCE [GENOMIC DNA]</scope>
    <source>
        <strain>MS11 / Isolate D3A</strain>
    </source>
</reference>
<keyword id="KW-0130">Cell adhesion</keyword>
<keyword id="KW-1015">Disulfide bond</keyword>
<keyword id="KW-0281">Fimbrium</keyword>
<keyword id="KW-0325">Glycoprotein</keyword>
<keyword id="KW-0472">Membrane</keyword>
<keyword id="KW-0488">Methylation</keyword>
<keyword id="KW-0812">Transmembrane</keyword>
<keyword id="KW-1133">Transmembrane helix</keyword>
<dbReference type="EMBL" id="X58404">
    <property type="protein sequence ID" value="CAA41303.1"/>
    <property type="molecule type" value="Genomic_DNA"/>
</dbReference>
<dbReference type="PIR" id="S15327">
    <property type="entry name" value="S15327"/>
</dbReference>
<dbReference type="SMR" id="Q00046"/>
<dbReference type="GlyCosmos" id="Q00046">
    <property type="glycosylation" value="1 site, No reported glycans"/>
</dbReference>
<dbReference type="GO" id="GO:0016020">
    <property type="term" value="C:membrane"/>
    <property type="evidence" value="ECO:0007669"/>
    <property type="project" value="UniProtKB-SubCell"/>
</dbReference>
<dbReference type="GO" id="GO:0009289">
    <property type="term" value="C:pilus"/>
    <property type="evidence" value="ECO:0007669"/>
    <property type="project" value="UniProtKB-SubCell"/>
</dbReference>
<dbReference type="GO" id="GO:0007155">
    <property type="term" value="P:cell adhesion"/>
    <property type="evidence" value="ECO:0007669"/>
    <property type="project" value="UniProtKB-KW"/>
</dbReference>
<dbReference type="Gene3D" id="3.30.700.10">
    <property type="entry name" value="Glycoprotein, Type 4 Pilin"/>
    <property type="match status" value="1"/>
</dbReference>
<dbReference type="InterPro" id="IPR012902">
    <property type="entry name" value="N_methyl_site"/>
</dbReference>
<dbReference type="InterPro" id="IPR001082">
    <property type="entry name" value="Pilin"/>
</dbReference>
<dbReference type="InterPro" id="IPR045584">
    <property type="entry name" value="Pilin-like"/>
</dbReference>
<dbReference type="InterPro" id="IPR050470">
    <property type="entry name" value="T4P/T2SS_Core"/>
</dbReference>
<dbReference type="NCBIfam" id="TIGR02532">
    <property type="entry name" value="IV_pilin_GFxxxE"/>
    <property type="match status" value="1"/>
</dbReference>
<dbReference type="PANTHER" id="PTHR30093">
    <property type="entry name" value="GENERAL SECRETION PATHWAY PROTEIN G"/>
    <property type="match status" value="1"/>
</dbReference>
<dbReference type="PANTHER" id="PTHR30093:SF34">
    <property type="entry name" value="PREPILIN PEPTIDASE-DEPENDENT PROTEIN D"/>
    <property type="match status" value="1"/>
</dbReference>
<dbReference type="Pfam" id="PF07963">
    <property type="entry name" value="N_methyl"/>
    <property type="match status" value="1"/>
</dbReference>
<dbReference type="Pfam" id="PF00114">
    <property type="entry name" value="Pilin"/>
    <property type="match status" value="1"/>
</dbReference>
<dbReference type="SUPFAM" id="SSF54523">
    <property type="entry name" value="Pili subunits"/>
    <property type="match status" value="1"/>
</dbReference>
<dbReference type="PROSITE" id="PS00409">
    <property type="entry name" value="PROKAR_NTER_METHYL"/>
    <property type="match status" value="1"/>
</dbReference>
<proteinExistence type="inferred from homology"/>
<gene>
    <name type="primary">pilE1</name>
</gene>
<comment type="function">
    <text evidence="2">Major component of the type IV pilus (T4P) that plays a role in cellular adherence, microcolony formation, resistance to neutrophil mediated killing, twitching motility as well as transformation. Mediates the attachment and the formation of bacterial microcolonies on host epithelial cells. Mechanistically, pili retractation induces host NF-kappa-B activation in infected cells, which is temporally associated with the formation of gonococcal microcolonies.</text>
</comment>
<comment type="subunit">
    <text>The pili are polar flexible filaments of about 5.4 nanometers diameter and 2.5 micrometers average length; they consist of only a single polypeptide chain arranged in a helical configuration of five subunits per turn in the assembled pilus.</text>
</comment>
<comment type="subcellular location">
    <subcellularLocation>
        <location>Fimbrium</location>
    </subcellularLocation>
    <subcellularLocation>
        <location evidence="3">Membrane</location>
        <topology evidence="3">Single-pass membrane protein</topology>
    </subcellularLocation>
</comment>
<comment type="similarity">
    <text evidence="5">Belongs to the N-Me-Phe pilin family.</text>
</comment>
<organism>
    <name type="scientific">Neisseria gonorrhoeae</name>
    <dbReference type="NCBI Taxonomy" id="485"/>
    <lineage>
        <taxon>Bacteria</taxon>
        <taxon>Pseudomonadati</taxon>
        <taxon>Pseudomonadota</taxon>
        <taxon>Betaproteobacteria</taxon>
        <taxon>Neisseriales</taxon>
        <taxon>Neisseriaceae</taxon>
        <taxon>Neisseria</taxon>
    </lineage>
</organism>
<evidence type="ECO:0000250" key="1"/>
<evidence type="ECO:0000250" key="2">
    <source>
        <dbReference type="UniProtKB" id="P02974"/>
    </source>
</evidence>
<evidence type="ECO:0000255" key="3"/>
<evidence type="ECO:0000255" key="4">
    <source>
        <dbReference type="PROSITE-ProRule" id="PRU01070"/>
    </source>
</evidence>
<evidence type="ECO:0000305" key="5"/>
<name>FMD3_NEIGO</name>
<feature type="propeptide" id="PRO_0000024160" evidence="3">
    <location>
        <begin position="1"/>
        <end position="7"/>
    </location>
</feature>
<feature type="chain" id="PRO_0000024161" description="Type IV major pilin protein PilE1">
    <location>
        <begin position="8"/>
        <end position="180"/>
    </location>
</feature>
<feature type="transmembrane region" description="Helical" evidence="3">
    <location>
        <begin position="8"/>
        <end position="28"/>
    </location>
</feature>
<feature type="modified residue" description="N-methylphenylalanine" evidence="4">
    <location>
        <position position="8"/>
    </location>
</feature>
<feature type="glycosylation site" description="O-linked (GlcNAc...) serine" evidence="1">
    <location>
        <position position="70"/>
    </location>
</feature>
<feature type="disulfide bond" evidence="1">
    <location>
        <begin position="128"/>
        <end position="160"/>
    </location>
</feature>
<sequence>MNTLQKGFTLIELMIVIAIVGILAAVALPAYQDYTARAQVSEAILLAEGQKSAVTEYYLNHGKWPENNTSAGVASPPSDIKGKYVKEVKVENGVVTATMNSSGVNKEIQGKRLSLWGRRENGSVKWFCGQPVTRAKADADADAAGKDTTNIDTKHLPSTCRDAASAVCIETPPTAFYKNT</sequence>
<protein>
    <recommendedName>
        <fullName>Type IV major pilin protein PilE1</fullName>
    </recommendedName>
    <alternativeName>
        <fullName>L-pilin</fullName>
    </alternativeName>
</protein>
<accession>Q00046</accession>